<comment type="function">
    <text evidence="1">Transferase that catalyzes the transfer of sulfur from thiosulfate to thiophilic acceptors such as cyanide or dithiols. May function in a CysM-independent thiosulfate assimilation pathway by catalyzing the conversion of thiosulfate to sulfite, which can then be used for L-cysteine biosynthesis.</text>
</comment>
<comment type="catalytic activity">
    <reaction evidence="1">
        <text>thiosulfate + hydrogen cyanide = thiocyanate + sulfite + 2 H(+)</text>
        <dbReference type="Rhea" id="RHEA:16881"/>
        <dbReference type="ChEBI" id="CHEBI:15378"/>
        <dbReference type="ChEBI" id="CHEBI:17359"/>
        <dbReference type="ChEBI" id="CHEBI:18022"/>
        <dbReference type="ChEBI" id="CHEBI:18407"/>
        <dbReference type="ChEBI" id="CHEBI:33542"/>
        <dbReference type="EC" id="2.8.1.1"/>
    </reaction>
</comment>
<comment type="catalytic activity">
    <reaction evidence="1">
        <text>thiosulfate + [thioredoxin]-dithiol = [thioredoxin]-disulfide + hydrogen sulfide + sulfite + 2 H(+)</text>
        <dbReference type="Rhea" id="RHEA:83859"/>
        <dbReference type="Rhea" id="RHEA-COMP:10698"/>
        <dbReference type="Rhea" id="RHEA-COMP:10700"/>
        <dbReference type="ChEBI" id="CHEBI:15378"/>
        <dbReference type="ChEBI" id="CHEBI:17359"/>
        <dbReference type="ChEBI" id="CHEBI:29919"/>
        <dbReference type="ChEBI" id="CHEBI:29950"/>
        <dbReference type="ChEBI" id="CHEBI:33542"/>
        <dbReference type="ChEBI" id="CHEBI:50058"/>
    </reaction>
</comment>
<comment type="subcellular location">
    <subcellularLocation>
        <location evidence="1">Cytoplasm</location>
    </subcellularLocation>
</comment>
<comment type="similarity">
    <text evidence="1">Belongs to the GlpE family.</text>
</comment>
<feature type="chain" id="PRO_1000062962" description="Thiosulfate sulfurtransferase GlpE">
    <location>
        <begin position="1"/>
        <end position="105"/>
    </location>
</feature>
<feature type="domain" description="Rhodanese" evidence="1">
    <location>
        <begin position="15"/>
        <end position="103"/>
    </location>
</feature>
<feature type="active site" description="Cysteine persulfide intermediate" evidence="1">
    <location>
        <position position="63"/>
    </location>
</feature>
<proteinExistence type="inferred from homology"/>
<gene>
    <name evidence="1" type="primary">glpE</name>
    <name type="ordered locus">CGSHiEE_08700</name>
</gene>
<keyword id="KW-0963">Cytoplasm</keyword>
<keyword id="KW-0808">Transferase</keyword>
<sequence>MSFKEITPQQAWEMMQQGAILVDIRDNMRFAYSHPKGAFHLTNQSFLQFEELADFDSPIIVSCYHGVSSRNVATFLVEQGYENVFSMIGGFDGWCRAELPIDTAY</sequence>
<protein>
    <recommendedName>
        <fullName evidence="1">Thiosulfate sulfurtransferase GlpE</fullName>
        <ecNumber evidence="1">2.8.1.1</ecNumber>
    </recommendedName>
</protein>
<accession>A5UE38</accession>
<name>GLPE_HAEIE</name>
<organism>
    <name type="scientific">Haemophilus influenzae (strain PittEE)</name>
    <dbReference type="NCBI Taxonomy" id="374930"/>
    <lineage>
        <taxon>Bacteria</taxon>
        <taxon>Pseudomonadati</taxon>
        <taxon>Pseudomonadota</taxon>
        <taxon>Gammaproteobacteria</taxon>
        <taxon>Pasteurellales</taxon>
        <taxon>Pasteurellaceae</taxon>
        <taxon>Haemophilus</taxon>
    </lineage>
</organism>
<evidence type="ECO:0000255" key="1">
    <source>
        <dbReference type="HAMAP-Rule" id="MF_01009"/>
    </source>
</evidence>
<reference key="1">
    <citation type="journal article" date="2007" name="Genome Biol.">
        <title>Characterization and modeling of the Haemophilus influenzae core and supragenomes based on the complete genomic sequences of Rd and 12 clinical nontypeable strains.</title>
        <authorList>
            <person name="Hogg J.S."/>
            <person name="Hu F.Z."/>
            <person name="Janto B."/>
            <person name="Boissy R."/>
            <person name="Hayes J."/>
            <person name="Keefe R."/>
            <person name="Post J.C."/>
            <person name="Ehrlich G.D."/>
        </authorList>
    </citation>
    <scope>NUCLEOTIDE SEQUENCE [LARGE SCALE GENOMIC DNA]</scope>
    <source>
        <strain>PittEE</strain>
    </source>
</reference>
<dbReference type="EC" id="2.8.1.1" evidence="1"/>
<dbReference type="EMBL" id="CP000671">
    <property type="protein sequence ID" value="ABQ99039.1"/>
    <property type="molecule type" value="Genomic_DNA"/>
</dbReference>
<dbReference type="SMR" id="A5UE38"/>
<dbReference type="KEGG" id="hip:CGSHiEE_08700"/>
<dbReference type="HOGENOM" id="CLU_089574_14_0_6"/>
<dbReference type="GO" id="GO:0005737">
    <property type="term" value="C:cytoplasm"/>
    <property type="evidence" value="ECO:0007669"/>
    <property type="project" value="UniProtKB-SubCell"/>
</dbReference>
<dbReference type="GO" id="GO:0004792">
    <property type="term" value="F:thiosulfate-cyanide sulfurtransferase activity"/>
    <property type="evidence" value="ECO:0007669"/>
    <property type="project" value="UniProtKB-UniRule"/>
</dbReference>
<dbReference type="GO" id="GO:0006071">
    <property type="term" value="P:glycerol metabolic process"/>
    <property type="evidence" value="ECO:0007669"/>
    <property type="project" value="UniProtKB-UniRule"/>
</dbReference>
<dbReference type="CDD" id="cd01444">
    <property type="entry name" value="GlpE_ST"/>
    <property type="match status" value="1"/>
</dbReference>
<dbReference type="Gene3D" id="3.40.250.10">
    <property type="entry name" value="Rhodanese-like domain"/>
    <property type="match status" value="1"/>
</dbReference>
<dbReference type="HAMAP" id="MF_01009">
    <property type="entry name" value="Thiosulf_sulfurtr"/>
    <property type="match status" value="1"/>
</dbReference>
<dbReference type="InterPro" id="IPR050229">
    <property type="entry name" value="GlpE_sulfurtransferase"/>
</dbReference>
<dbReference type="InterPro" id="IPR001763">
    <property type="entry name" value="Rhodanese-like_dom"/>
</dbReference>
<dbReference type="InterPro" id="IPR036873">
    <property type="entry name" value="Rhodanese-like_dom_sf"/>
</dbReference>
<dbReference type="InterPro" id="IPR023695">
    <property type="entry name" value="Thiosulf_sulfurTrfase"/>
</dbReference>
<dbReference type="NCBIfam" id="NF001195">
    <property type="entry name" value="PRK00162.1"/>
    <property type="match status" value="1"/>
</dbReference>
<dbReference type="PANTHER" id="PTHR43031">
    <property type="entry name" value="FAD-DEPENDENT OXIDOREDUCTASE"/>
    <property type="match status" value="1"/>
</dbReference>
<dbReference type="PANTHER" id="PTHR43031:SF6">
    <property type="entry name" value="THIOSULFATE SULFURTRANSFERASE GLPE"/>
    <property type="match status" value="1"/>
</dbReference>
<dbReference type="Pfam" id="PF00581">
    <property type="entry name" value="Rhodanese"/>
    <property type="match status" value="1"/>
</dbReference>
<dbReference type="SMART" id="SM00450">
    <property type="entry name" value="RHOD"/>
    <property type="match status" value="1"/>
</dbReference>
<dbReference type="SUPFAM" id="SSF52821">
    <property type="entry name" value="Rhodanese/Cell cycle control phosphatase"/>
    <property type="match status" value="1"/>
</dbReference>
<dbReference type="PROSITE" id="PS50206">
    <property type="entry name" value="RHODANESE_3"/>
    <property type="match status" value="1"/>
</dbReference>